<sequence length="79" mass="9275">MFVELVYDKRNVEGLPGAREIILNELTKRVHQLFPDAQVKVKPMQANALNSDCTKTEKERLHRMLEEMFEEADMWLVAE</sequence>
<gene>
    <name type="primary">msgA</name>
    <name type="ordered locus">STY1883</name>
    <name type="ordered locus">t1113</name>
</gene>
<organism>
    <name type="scientific">Salmonella typhi</name>
    <dbReference type="NCBI Taxonomy" id="90370"/>
    <lineage>
        <taxon>Bacteria</taxon>
        <taxon>Pseudomonadati</taxon>
        <taxon>Pseudomonadota</taxon>
        <taxon>Gammaproteobacteria</taxon>
        <taxon>Enterobacterales</taxon>
        <taxon>Enterobacteriaceae</taxon>
        <taxon>Salmonella</taxon>
    </lineage>
</organism>
<evidence type="ECO:0000250" key="1"/>
<evidence type="ECO:0000305" key="2"/>
<name>MSGA_SALTI</name>
<accession>P0A1G4</accession>
<accession>Q56031</accession>
<proteinExistence type="inferred from homology"/>
<keyword id="KW-0843">Virulence</keyword>
<feature type="chain" id="PRO_0000201644" description="Virulence protein MsgA">
    <location>
        <begin position="1"/>
        <end position="79"/>
    </location>
</feature>
<feature type="sequence conflict" description="In Ref. 2; AAO68775." evidence="2" ref="2">
    <original>G</original>
    <variation>S</variation>
    <location>
        <position position="17"/>
    </location>
</feature>
<dbReference type="EMBL" id="AL513382">
    <property type="protein sequence ID" value="CAD02118.1"/>
    <property type="molecule type" value="Genomic_DNA"/>
</dbReference>
<dbReference type="EMBL" id="AE014613">
    <property type="protein sequence ID" value="AAO68775.1"/>
    <property type="molecule type" value="Genomic_DNA"/>
</dbReference>
<dbReference type="RefSeq" id="NP_456274.1">
    <property type="nucleotide sequence ID" value="NC_003198.1"/>
</dbReference>
<dbReference type="RefSeq" id="WP_000497451.1">
    <property type="nucleotide sequence ID" value="NZ_WSUK01000070.1"/>
</dbReference>
<dbReference type="SMR" id="P0A1G4"/>
<dbReference type="STRING" id="220341.gene:17585812"/>
<dbReference type="KEGG" id="stt:t1113"/>
<dbReference type="KEGG" id="sty:STY1883"/>
<dbReference type="PATRIC" id="fig|220341.7.peg.1898"/>
<dbReference type="eggNOG" id="ENOG5032RKW">
    <property type="taxonomic scope" value="Bacteria"/>
</dbReference>
<dbReference type="HOGENOM" id="CLU_169697_0_0_6"/>
<dbReference type="OMA" id="DMWLVNE"/>
<dbReference type="OrthoDB" id="6475306at2"/>
<dbReference type="Proteomes" id="UP000000541">
    <property type="component" value="Chromosome"/>
</dbReference>
<dbReference type="Proteomes" id="UP000002670">
    <property type="component" value="Chromosome"/>
</dbReference>
<dbReference type="Gene3D" id="3.30.910.10">
    <property type="entry name" value="DinI-like"/>
    <property type="match status" value="1"/>
</dbReference>
<dbReference type="InterPro" id="IPR036687">
    <property type="entry name" value="DinI-like_sf"/>
</dbReference>
<dbReference type="InterPro" id="IPR010391">
    <property type="entry name" value="DNA_damage-inducible_DinI-like"/>
</dbReference>
<dbReference type="PANTHER" id="PTHR36572">
    <property type="entry name" value="DNA DAMAGE-INDUCIBLE PROTEIN I-RELATED"/>
    <property type="match status" value="1"/>
</dbReference>
<dbReference type="PANTHER" id="PTHR36572:SF3">
    <property type="entry name" value="VIRULENCE PROTEIN MSGA"/>
    <property type="match status" value="1"/>
</dbReference>
<dbReference type="Pfam" id="PF06183">
    <property type="entry name" value="DinI"/>
    <property type="match status" value="1"/>
</dbReference>
<dbReference type="SUPFAM" id="SSF54857">
    <property type="entry name" value="DNA damage-inducible protein DinI"/>
    <property type="match status" value="1"/>
</dbReference>
<protein>
    <recommendedName>
        <fullName>Virulence protein MsgA</fullName>
    </recommendedName>
</protein>
<reference key="1">
    <citation type="journal article" date="2001" name="Nature">
        <title>Complete genome sequence of a multiple drug resistant Salmonella enterica serovar Typhi CT18.</title>
        <authorList>
            <person name="Parkhill J."/>
            <person name="Dougan G."/>
            <person name="James K.D."/>
            <person name="Thomson N.R."/>
            <person name="Pickard D."/>
            <person name="Wain J."/>
            <person name="Churcher C.M."/>
            <person name="Mungall K.L."/>
            <person name="Bentley S.D."/>
            <person name="Holden M.T.G."/>
            <person name="Sebaihia M."/>
            <person name="Baker S."/>
            <person name="Basham D."/>
            <person name="Brooks K."/>
            <person name="Chillingworth T."/>
            <person name="Connerton P."/>
            <person name="Cronin A."/>
            <person name="Davis P."/>
            <person name="Davies R.M."/>
            <person name="Dowd L."/>
            <person name="White N."/>
            <person name="Farrar J."/>
            <person name="Feltwell T."/>
            <person name="Hamlin N."/>
            <person name="Haque A."/>
            <person name="Hien T.T."/>
            <person name="Holroyd S."/>
            <person name="Jagels K."/>
            <person name="Krogh A."/>
            <person name="Larsen T.S."/>
            <person name="Leather S."/>
            <person name="Moule S."/>
            <person name="O'Gaora P."/>
            <person name="Parry C."/>
            <person name="Quail M.A."/>
            <person name="Rutherford K.M."/>
            <person name="Simmonds M."/>
            <person name="Skelton J."/>
            <person name="Stevens K."/>
            <person name="Whitehead S."/>
            <person name="Barrell B.G."/>
        </authorList>
    </citation>
    <scope>NUCLEOTIDE SEQUENCE [LARGE SCALE GENOMIC DNA]</scope>
    <source>
        <strain>CT18</strain>
    </source>
</reference>
<reference key="2">
    <citation type="journal article" date="2003" name="J. Bacteriol.">
        <title>Comparative genomics of Salmonella enterica serovar Typhi strains Ty2 and CT18.</title>
        <authorList>
            <person name="Deng W."/>
            <person name="Liou S.-R."/>
            <person name="Plunkett G. III"/>
            <person name="Mayhew G.F."/>
            <person name="Rose D.J."/>
            <person name="Burland V."/>
            <person name="Kodoyianni V."/>
            <person name="Schwartz D.C."/>
            <person name="Blattner F.R."/>
        </authorList>
    </citation>
    <scope>NUCLEOTIDE SEQUENCE [LARGE SCALE GENOMIC DNA]</scope>
    <source>
        <strain>ATCC 700931 / Ty2</strain>
    </source>
</reference>
<comment type="function">
    <text evidence="1">Affects survival in macrophages.</text>
</comment>
<comment type="similarity">
    <text evidence="2">Belongs to the DinI family.</text>
</comment>